<proteinExistence type="inferred from homology"/>
<keyword id="KW-0131">Cell cycle</keyword>
<keyword id="KW-0132">Cell division</keyword>
<keyword id="KW-0717">Septation</keyword>
<organism>
    <name type="scientific">Acinetobacter baumannii (strain ACICU)</name>
    <dbReference type="NCBI Taxonomy" id="405416"/>
    <lineage>
        <taxon>Bacteria</taxon>
        <taxon>Pseudomonadati</taxon>
        <taxon>Pseudomonadota</taxon>
        <taxon>Gammaproteobacteria</taxon>
        <taxon>Moraxellales</taxon>
        <taxon>Moraxellaceae</taxon>
        <taxon>Acinetobacter</taxon>
        <taxon>Acinetobacter calcoaceticus/baumannii complex</taxon>
    </lineage>
</organism>
<comment type="function">
    <text evidence="1">Cell division inhibitor that blocks the formation of polar Z ring septums. Rapidly oscillates between the poles of the cell to destabilize FtsZ filaments that have formed before they mature into polar Z rings. Prevents FtsZ polymerization.</text>
</comment>
<comment type="subunit">
    <text evidence="1">Interacts with MinD and FtsZ.</text>
</comment>
<comment type="similarity">
    <text evidence="1">Belongs to the MinC family.</text>
</comment>
<sequence>MADIRITGRMVNFSRITFDTNDHDVIRQQLSNILNEGSYQGTVVIIDSTVEQELIALIQLLVSMGLQPMAVIDGILGDEARAIQFPVLPADQPLQRIKPTAEQVAIVEKPSSAQASVETKKPLNNNAVAHITSYHDEILRTGQSLVQDQGDIILKAGMNSGSEVIASGNIHIYGTVRGRVIAGAGGHAAARIFCQSLEAELVSIAGTYCVADDIPKHVVKKPVHIYLNEKQELEFEALEL</sequence>
<protein>
    <recommendedName>
        <fullName evidence="1">Probable septum site-determining protein MinC</fullName>
    </recommendedName>
</protein>
<feature type="chain" id="PRO_1000114261" description="Probable septum site-determining protein MinC">
    <location>
        <begin position="1"/>
        <end position="240"/>
    </location>
</feature>
<reference key="1">
    <citation type="journal article" date="2008" name="Antimicrob. Agents Chemother.">
        <title>Whole-genome pyrosequencing of an epidemic multidrug-resistant Acinetobacter baumannii strain belonging to the European clone II group.</title>
        <authorList>
            <person name="Iacono M."/>
            <person name="Villa L."/>
            <person name="Fortini D."/>
            <person name="Bordoni R."/>
            <person name="Imperi F."/>
            <person name="Bonnal R.J."/>
            <person name="Sicheritz-Ponten T."/>
            <person name="De Bellis G."/>
            <person name="Visca P."/>
            <person name="Cassone A."/>
            <person name="Carattoli A."/>
        </authorList>
    </citation>
    <scope>NUCLEOTIDE SEQUENCE [LARGE SCALE GENOMIC DNA]</scope>
    <source>
        <strain>ACICU</strain>
    </source>
</reference>
<dbReference type="EMBL" id="CP000863">
    <property type="protein sequence ID" value="ACC56144.1"/>
    <property type="molecule type" value="Genomic_DNA"/>
</dbReference>
<dbReference type="RefSeq" id="WP_000763677.1">
    <property type="nucleotide sequence ID" value="NZ_CP031380.1"/>
</dbReference>
<dbReference type="SMR" id="B2HUR9"/>
<dbReference type="GeneID" id="92892810"/>
<dbReference type="KEGG" id="abc:ACICU_00832"/>
<dbReference type="HOGENOM" id="CLU_067812_0_1_6"/>
<dbReference type="Proteomes" id="UP000008839">
    <property type="component" value="Chromosome"/>
</dbReference>
<dbReference type="GO" id="GO:0000902">
    <property type="term" value="P:cell morphogenesis"/>
    <property type="evidence" value="ECO:0007669"/>
    <property type="project" value="InterPro"/>
</dbReference>
<dbReference type="GO" id="GO:0000917">
    <property type="term" value="P:division septum assembly"/>
    <property type="evidence" value="ECO:0007669"/>
    <property type="project" value="UniProtKB-KW"/>
</dbReference>
<dbReference type="GO" id="GO:0051302">
    <property type="term" value="P:regulation of cell division"/>
    <property type="evidence" value="ECO:0007669"/>
    <property type="project" value="InterPro"/>
</dbReference>
<dbReference type="GO" id="GO:1901891">
    <property type="term" value="P:regulation of cell septum assembly"/>
    <property type="evidence" value="ECO:0007669"/>
    <property type="project" value="InterPro"/>
</dbReference>
<dbReference type="Gene3D" id="2.160.20.70">
    <property type="match status" value="1"/>
</dbReference>
<dbReference type="Gene3D" id="3.30.70.260">
    <property type="match status" value="1"/>
</dbReference>
<dbReference type="HAMAP" id="MF_00267">
    <property type="entry name" value="MinC"/>
    <property type="match status" value="1"/>
</dbReference>
<dbReference type="InterPro" id="IPR016098">
    <property type="entry name" value="CAP/MinC_C"/>
</dbReference>
<dbReference type="InterPro" id="IPR013033">
    <property type="entry name" value="MinC"/>
</dbReference>
<dbReference type="InterPro" id="IPR036145">
    <property type="entry name" value="MinC_C_sf"/>
</dbReference>
<dbReference type="InterPro" id="IPR007874">
    <property type="entry name" value="MinC_N"/>
</dbReference>
<dbReference type="InterPro" id="IPR005526">
    <property type="entry name" value="Septum_form_inhib_MinC_C"/>
</dbReference>
<dbReference type="NCBIfam" id="TIGR01222">
    <property type="entry name" value="minC"/>
    <property type="match status" value="1"/>
</dbReference>
<dbReference type="PANTHER" id="PTHR34108">
    <property type="entry name" value="SEPTUM SITE-DETERMINING PROTEIN MINC"/>
    <property type="match status" value="1"/>
</dbReference>
<dbReference type="PANTHER" id="PTHR34108:SF1">
    <property type="entry name" value="SEPTUM SITE-DETERMINING PROTEIN MINC"/>
    <property type="match status" value="1"/>
</dbReference>
<dbReference type="Pfam" id="PF03775">
    <property type="entry name" value="MinC_C"/>
    <property type="match status" value="1"/>
</dbReference>
<dbReference type="Pfam" id="PF05209">
    <property type="entry name" value="MinC_N"/>
    <property type="match status" value="1"/>
</dbReference>
<dbReference type="SUPFAM" id="SSF63848">
    <property type="entry name" value="Cell-division inhibitor MinC, C-terminal domain"/>
    <property type="match status" value="1"/>
</dbReference>
<accession>B2HUR9</accession>
<name>MINC_ACIBC</name>
<evidence type="ECO:0000255" key="1">
    <source>
        <dbReference type="HAMAP-Rule" id="MF_00267"/>
    </source>
</evidence>
<gene>
    <name evidence="1" type="primary">minC</name>
    <name type="ordered locus">ACICU_00832</name>
</gene>